<dbReference type="EC" id="2.4.1.227" evidence="1"/>
<dbReference type="EMBL" id="CP000964">
    <property type="protein sequence ID" value="ACI11633.1"/>
    <property type="molecule type" value="Genomic_DNA"/>
</dbReference>
<dbReference type="SMR" id="B5Y1U7"/>
<dbReference type="CAZy" id="GT28">
    <property type="family name" value="Glycosyltransferase Family 28"/>
</dbReference>
<dbReference type="KEGG" id="kpe:KPK_4647"/>
<dbReference type="HOGENOM" id="CLU_037404_2_0_6"/>
<dbReference type="UniPathway" id="UPA00219"/>
<dbReference type="Proteomes" id="UP000001734">
    <property type="component" value="Chromosome"/>
</dbReference>
<dbReference type="GO" id="GO:0005886">
    <property type="term" value="C:plasma membrane"/>
    <property type="evidence" value="ECO:0007669"/>
    <property type="project" value="UniProtKB-SubCell"/>
</dbReference>
<dbReference type="GO" id="GO:0051991">
    <property type="term" value="F:UDP-N-acetyl-D-glucosamine:N-acetylmuramoyl-L-alanyl-D-glutamyl-meso-2,6-diaminopimelyl-D-alanyl-D-alanine-diphosphoundecaprenol 4-beta-N-acetylglucosaminlytransferase activity"/>
    <property type="evidence" value="ECO:0007669"/>
    <property type="project" value="RHEA"/>
</dbReference>
<dbReference type="GO" id="GO:0050511">
    <property type="term" value="F:undecaprenyldiphospho-muramoylpentapeptide beta-N-acetylglucosaminyltransferase activity"/>
    <property type="evidence" value="ECO:0007669"/>
    <property type="project" value="UniProtKB-UniRule"/>
</dbReference>
<dbReference type="GO" id="GO:0005975">
    <property type="term" value="P:carbohydrate metabolic process"/>
    <property type="evidence" value="ECO:0007669"/>
    <property type="project" value="InterPro"/>
</dbReference>
<dbReference type="GO" id="GO:0051301">
    <property type="term" value="P:cell division"/>
    <property type="evidence" value="ECO:0007669"/>
    <property type="project" value="UniProtKB-KW"/>
</dbReference>
<dbReference type="GO" id="GO:0071555">
    <property type="term" value="P:cell wall organization"/>
    <property type="evidence" value="ECO:0007669"/>
    <property type="project" value="UniProtKB-KW"/>
</dbReference>
<dbReference type="GO" id="GO:0030259">
    <property type="term" value="P:lipid glycosylation"/>
    <property type="evidence" value="ECO:0007669"/>
    <property type="project" value="UniProtKB-UniRule"/>
</dbReference>
<dbReference type="GO" id="GO:0009252">
    <property type="term" value="P:peptidoglycan biosynthetic process"/>
    <property type="evidence" value="ECO:0007669"/>
    <property type="project" value="UniProtKB-UniRule"/>
</dbReference>
<dbReference type="GO" id="GO:0008360">
    <property type="term" value="P:regulation of cell shape"/>
    <property type="evidence" value="ECO:0007669"/>
    <property type="project" value="UniProtKB-KW"/>
</dbReference>
<dbReference type="CDD" id="cd03785">
    <property type="entry name" value="GT28_MurG"/>
    <property type="match status" value="1"/>
</dbReference>
<dbReference type="FunFam" id="3.40.50.2000:FF:000016">
    <property type="entry name" value="UDP-N-acetylglucosamine--N-acetylmuramyl-(pentapeptide) pyrophosphoryl-undecaprenol N-acetylglucosamine transferase"/>
    <property type="match status" value="1"/>
</dbReference>
<dbReference type="FunFam" id="3.40.50.2000:FF:000018">
    <property type="entry name" value="UDP-N-acetylglucosamine--N-acetylmuramyl-(pentapeptide) pyrophosphoryl-undecaprenol N-acetylglucosamine transferase"/>
    <property type="match status" value="1"/>
</dbReference>
<dbReference type="Gene3D" id="3.40.50.2000">
    <property type="entry name" value="Glycogen Phosphorylase B"/>
    <property type="match status" value="2"/>
</dbReference>
<dbReference type="HAMAP" id="MF_00033">
    <property type="entry name" value="MurG"/>
    <property type="match status" value="1"/>
</dbReference>
<dbReference type="InterPro" id="IPR006009">
    <property type="entry name" value="GlcNAc_MurG"/>
</dbReference>
<dbReference type="InterPro" id="IPR007235">
    <property type="entry name" value="Glyco_trans_28_C"/>
</dbReference>
<dbReference type="InterPro" id="IPR004276">
    <property type="entry name" value="GlycoTrans_28_N"/>
</dbReference>
<dbReference type="NCBIfam" id="TIGR01133">
    <property type="entry name" value="murG"/>
    <property type="match status" value="1"/>
</dbReference>
<dbReference type="PANTHER" id="PTHR21015:SF22">
    <property type="entry name" value="GLYCOSYLTRANSFERASE"/>
    <property type="match status" value="1"/>
</dbReference>
<dbReference type="PANTHER" id="PTHR21015">
    <property type="entry name" value="UDP-N-ACETYLGLUCOSAMINE--N-ACETYLMURAMYL-(PENTAPEPTIDE) PYROPHOSPHORYL-UNDECAPRENOL N-ACETYLGLUCOSAMINE TRANSFERASE 1"/>
    <property type="match status" value="1"/>
</dbReference>
<dbReference type="Pfam" id="PF04101">
    <property type="entry name" value="Glyco_tran_28_C"/>
    <property type="match status" value="1"/>
</dbReference>
<dbReference type="Pfam" id="PF03033">
    <property type="entry name" value="Glyco_transf_28"/>
    <property type="match status" value="1"/>
</dbReference>
<dbReference type="SUPFAM" id="SSF53756">
    <property type="entry name" value="UDP-Glycosyltransferase/glycogen phosphorylase"/>
    <property type="match status" value="1"/>
</dbReference>
<accession>B5Y1U7</accession>
<reference key="1">
    <citation type="journal article" date="2008" name="PLoS Genet.">
        <title>Complete genome sequence of the N2-fixing broad host range endophyte Klebsiella pneumoniae 342 and virulence predictions verified in mice.</title>
        <authorList>
            <person name="Fouts D.E."/>
            <person name="Tyler H.L."/>
            <person name="DeBoy R.T."/>
            <person name="Daugherty S."/>
            <person name="Ren Q."/>
            <person name="Badger J.H."/>
            <person name="Durkin A.S."/>
            <person name="Huot H."/>
            <person name="Shrivastava S."/>
            <person name="Kothari S."/>
            <person name="Dodson R.J."/>
            <person name="Mohamoud Y."/>
            <person name="Khouri H."/>
            <person name="Roesch L.F.W."/>
            <person name="Krogfelt K.A."/>
            <person name="Struve C."/>
            <person name="Triplett E.W."/>
            <person name="Methe B.A."/>
        </authorList>
    </citation>
    <scope>NUCLEOTIDE SEQUENCE [LARGE SCALE GENOMIC DNA]</scope>
    <source>
        <strain>342</strain>
    </source>
</reference>
<comment type="function">
    <text evidence="1">Cell wall formation. Catalyzes the transfer of a GlcNAc subunit on undecaprenyl-pyrophosphoryl-MurNAc-pentapeptide (lipid intermediate I) to form undecaprenyl-pyrophosphoryl-MurNAc-(pentapeptide)GlcNAc (lipid intermediate II).</text>
</comment>
<comment type="catalytic activity">
    <reaction evidence="1">
        <text>di-trans,octa-cis-undecaprenyl diphospho-N-acetyl-alpha-D-muramoyl-L-alanyl-D-glutamyl-meso-2,6-diaminopimeloyl-D-alanyl-D-alanine + UDP-N-acetyl-alpha-D-glucosamine = di-trans,octa-cis-undecaprenyl diphospho-[N-acetyl-alpha-D-glucosaminyl-(1-&gt;4)]-N-acetyl-alpha-D-muramoyl-L-alanyl-D-glutamyl-meso-2,6-diaminopimeloyl-D-alanyl-D-alanine + UDP + H(+)</text>
        <dbReference type="Rhea" id="RHEA:31227"/>
        <dbReference type="ChEBI" id="CHEBI:15378"/>
        <dbReference type="ChEBI" id="CHEBI:57705"/>
        <dbReference type="ChEBI" id="CHEBI:58223"/>
        <dbReference type="ChEBI" id="CHEBI:61387"/>
        <dbReference type="ChEBI" id="CHEBI:61388"/>
        <dbReference type="EC" id="2.4.1.227"/>
    </reaction>
</comment>
<comment type="pathway">
    <text evidence="1">Cell wall biogenesis; peptidoglycan biosynthesis.</text>
</comment>
<comment type="subcellular location">
    <subcellularLocation>
        <location evidence="1">Cell inner membrane</location>
        <topology evidence="1">Peripheral membrane protein</topology>
        <orientation evidence="1">Cytoplasmic side</orientation>
    </subcellularLocation>
</comment>
<comment type="similarity">
    <text evidence="1">Belongs to the glycosyltransferase 28 family. MurG subfamily.</text>
</comment>
<protein>
    <recommendedName>
        <fullName evidence="1">UDP-N-acetylglucosamine--N-acetylmuramyl-(pentapeptide) pyrophosphoryl-undecaprenol N-acetylglucosamine transferase</fullName>
        <ecNumber evidence="1">2.4.1.227</ecNumber>
    </recommendedName>
    <alternativeName>
        <fullName evidence="1">Undecaprenyl-PP-MurNAc-pentapeptide-UDPGlcNAc GlcNAc transferase</fullName>
    </alternativeName>
</protein>
<organism>
    <name type="scientific">Klebsiella pneumoniae (strain 342)</name>
    <dbReference type="NCBI Taxonomy" id="507522"/>
    <lineage>
        <taxon>Bacteria</taxon>
        <taxon>Pseudomonadati</taxon>
        <taxon>Pseudomonadota</taxon>
        <taxon>Gammaproteobacteria</taxon>
        <taxon>Enterobacterales</taxon>
        <taxon>Enterobacteriaceae</taxon>
        <taxon>Klebsiella/Raoultella group</taxon>
        <taxon>Klebsiella</taxon>
        <taxon>Klebsiella pneumoniae complex</taxon>
    </lineage>
</organism>
<gene>
    <name evidence="1" type="primary">murG</name>
    <name type="ordered locus">KPK_4647</name>
</gene>
<evidence type="ECO:0000255" key="1">
    <source>
        <dbReference type="HAMAP-Rule" id="MF_00033"/>
    </source>
</evidence>
<keyword id="KW-0131">Cell cycle</keyword>
<keyword id="KW-0132">Cell division</keyword>
<keyword id="KW-0997">Cell inner membrane</keyword>
<keyword id="KW-1003">Cell membrane</keyword>
<keyword id="KW-0133">Cell shape</keyword>
<keyword id="KW-0961">Cell wall biogenesis/degradation</keyword>
<keyword id="KW-0328">Glycosyltransferase</keyword>
<keyword id="KW-0472">Membrane</keyword>
<keyword id="KW-0573">Peptidoglycan synthesis</keyword>
<keyword id="KW-0808">Transferase</keyword>
<name>MURG_KLEP3</name>
<feature type="chain" id="PRO_1000090441" description="UDP-N-acetylglucosamine--N-acetylmuramyl-(pentapeptide) pyrophosphoryl-undecaprenol N-acetylglucosamine transferase">
    <location>
        <begin position="1"/>
        <end position="356"/>
    </location>
</feature>
<feature type="binding site" evidence="1">
    <location>
        <begin position="15"/>
        <end position="17"/>
    </location>
    <ligand>
        <name>UDP-N-acetyl-alpha-D-glucosamine</name>
        <dbReference type="ChEBI" id="CHEBI:57705"/>
    </ligand>
</feature>
<feature type="binding site" evidence="1">
    <location>
        <position position="127"/>
    </location>
    <ligand>
        <name>UDP-N-acetyl-alpha-D-glucosamine</name>
        <dbReference type="ChEBI" id="CHEBI:57705"/>
    </ligand>
</feature>
<feature type="binding site" evidence="1">
    <location>
        <position position="163"/>
    </location>
    <ligand>
        <name>UDP-N-acetyl-alpha-D-glucosamine</name>
        <dbReference type="ChEBI" id="CHEBI:57705"/>
    </ligand>
</feature>
<feature type="binding site" evidence="1">
    <location>
        <position position="191"/>
    </location>
    <ligand>
        <name>UDP-N-acetyl-alpha-D-glucosamine</name>
        <dbReference type="ChEBI" id="CHEBI:57705"/>
    </ligand>
</feature>
<feature type="binding site" evidence="1">
    <location>
        <position position="244"/>
    </location>
    <ligand>
        <name>UDP-N-acetyl-alpha-D-glucosamine</name>
        <dbReference type="ChEBI" id="CHEBI:57705"/>
    </ligand>
</feature>
<feature type="binding site" evidence="1">
    <location>
        <begin position="263"/>
        <end position="268"/>
    </location>
    <ligand>
        <name>UDP-N-acetyl-alpha-D-glucosamine</name>
        <dbReference type="ChEBI" id="CHEBI:57705"/>
    </ligand>
</feature>
<feature type="binding site" evidence="1">
    <location>
        <position position="288"/>
    </location>
    <ligand>
        <name>UDP-N-acetyl-alpha-D-glucosamine</name>
        <dbReference type="ChEBI" id="CHEBI:57705"/>
    </ligand>
</feature>
<proteinExistence type="inferred from homology"/>
<sequence>MSGQEKRLMVMAGGTGGHVFPGLAVAHHLMDQGWQVRWLGTADRMEADLVPKNGIEIDFIRISGLRGKGIKAQLLAPVRIFNAWRQARAIMKRFQPDVVLGMGGYVSGPGGLAAWSLGIPVVLHEQNGIAGLTNKWLAKIAKKVMQAFPGAFPHADVVGNPVRTDVLALPLPGQRLVGRHGPIRVLVVGGSQGARVLNQTMPQVAAKLGDAVTIWHQSGKGGQQTVQQAYAAAGQPQHKVTEFIDDMAAAYAWADVVVCRSGALTVSEIAAAGLPALFVPFQHKDRQQYWNALPLEKAGAAKILEQPEFTVEAVASTLASWDRETLLDMAERARGASIPDATERVAEEVSAVALAR</sequence>